<comment type="function">
    <text evidence="1">Contributes to protect fish blood from freezing at subzero sea water temperatures. Lowers the blood freezing point. Binds to nascent ice crystals and prevents further growth (By similarity).</text>
</comment>
<comment type="subcellular location">
    <subcellularLocation>
        <location evidence="3">Secreted</location>
    </subcellularLocation>
</comment>
<comment type="tissue specificity">
    <text evidence="3">Detected in blood serum (at protein level).</text>
</comment>
<comment type="similarity">
    <text evidence="4">Belongs to the type-III AFP family.</text>
</comment>
<feature type="chain" id="PRO_0000155158" description="Ice-structuring protein SP4(HPLC 7)">
    <location>
        <begin position="1"/>
        <end position="64"/>
    </location>
</feature>
<feature type="domain" description="AFP-like" evidence="2">
    <location>
        <begin position="3"/>
        <end position="62"/>
    </location>
</feature>
<feature type="site" description="Important for ice-binding" evidence="1">
    <location>
        <position position="8"/>
    </location>
</feature>
<feature type="site" description="Important for ice-binding" evidence="1">
    <location>
        <position position="13"/>
    </location>
</feature>
<feature type="site" description="Important for ice-binding" evidence="1">
    <location>
        <position position="17"/>
    </location>
</feature>
<feature type="site" description="Important for ice-binding" evidence="1">
    <location>
        <position position="43"/>
    </location>
</feature>
<evidence type="ECO:0000250" key="1"/>
<evidence type="ECO:0000255" key="2">
    <source>
        <dbReference type="PROSITE-ProRule" id="PRU00021"/>
    </source>
</evidence>
<evidence type="ECO:0000269" key="3">
    <source>
    </source>
</evidence>
<evidence type="ECO:0000305" key="4"/>
<proteinExistence type="evidence at protein level"/>
<reference key="1">
    <citation type="journal article" date="1988" name="J. Biol. Chem.">
        <title>Multiple genes provide the basis for antifreeze protein diversity and dosage in the ocean pout, Macrozoarces americanus.</title>
        <authorList>
            <person name="Hew C.-L."/>
            <person name="Wang N.-C."/>
            <person name="Joshi S."/>
            <person name="Fletcher G.L."/>
            <person name="Scott G.K."/>
            <person name="Hayes P.H."/>
            <person name="Buettner B."/>
            <person name="Davies P.L."/>
        </authorList>
    </citation>
    <scope>PROTEIN SEQUENCE</scope>
    <scope>SUBCELLULAR LOCATION</scope>
    <scope>TISSUE SPECIFICITY</scope>
</reference>
<accession>P19611</accession>
<organism>
    <name type="scientific">Zoarces americanus</name>
    <name type="common">Ocean pout</name>
    <name type="synonym">Macrozoarces americanus</name>
    <dbReference type="NCBI Taxonomy" id="8199"/>
    <lineage>
        <taxon>Eukaryota</taxon>
        <taxon>Metazoa</taxon>
        <taxon>Chordata</taxon>
        <taxon>Craniata</taxon>
        <taxon>Vertebrata</taxon>
        <taxon>Euteleostomi</taxon>
        <taxon>Actinopterygii</taxon>
        <taxon>Neopterygii</taxon>
        <taxon>Teleostei</taxon>
        <taxon>Neoteleostei</taxon>
        <taxon>Acanthomorphata</taxon>
        <taxon>Eupercaria</taxon>
        <taxon>Perciformes</taxon>
        <taxon>Cottioidei</taxon>
        <taxon>Zoarcales</taxon>
        <taxon>Zoarcidae</taxon>
        <taxon>Zoarcinae</taxon>
        <taxon>Zoarces</taxon>
    </lineage>
</organism>
<protein>
    <recommendedName>
        <fullName>Ice-structuring protein SP4(HPLC 7)</fullName>
        <shortName>ISP SP4(HPLC 7)</shortName>
    </recommendedName>
    <alternativeName>
        <fullName>Antifreeze protein SP4(HPLC 7)</fullName>
    </alternativeName>
</protein>
<dbReference type="PIR" id="G31075">
    <property type="entry name" value="G31075"/>
</dbReference>
<dbReference type="SMR" id="P19611"/>
<dbReference type="GO" id="GO:0005576">
    <property type="term" value="C:extracellular region"/>
    <property type="evidence" value="ECO:0007669"/>
    <property type="project" value="UniProtKB-SubCell"/>
</dbReference>
<dbReference type="CDD" id="cd11617">
    <property type="entry name" value="Antifreeze_III"/>
    <property type="match status" value="1"/>
</dbReference>
<dbReference type="Gene3D" id="3.90.1210.10">
    <property type="entry name" value="Antifreeze-like/N-acetylneuraminic acid synthase C-terminal domain"/>
    <property type="match status" value="1"/>
</dbReference>
<dbReference type="InterPro" id="IPR006190">
    <property type="entry name" value="AFP_Neu5c_C"/>
</dbReference>
<dbReference type="InterPro" id="IPR036732">
    <property type="entry name" value="AFP_Neu5c_C_sf"/>
</dbReference>
<dbReference type="InterPro" id="IPR006013">
    <property type="entry name" value="Antifreeze_III"/>
</dbReference>
<dbReference type="InterPro" id="IPR013974">
    <property type="entry name" value="SAF"/>
</dbReference>
<dbReference type="Pfam" id="PF08666">
    <property type="entry name" value="SAF"/>
    <property type="match status" value="1"/>
</dbReference>
<dbReference type="PRINTS" id="PR00357">
    <property type="entry name" value="ANTIFREEZIII"/>
</dbReference>
<dbReference type="SMART" id="SM00858">
    <property type="entry name" value="SAF"/>
    <property type="match status" value="1"/>
</dbReference>
<dbReference type="SUPFAM" id="SSF51269">
    <property type="entry name" value="AFP III-like domain"/>
    <property type="match status" value="1"/>
</dbReference>
<dbReference type="PROSITE" id="PS50844">
    <property type="entry name" value="AFP_LIKE"/>
    <property type="match status" value="1"/>
</dbReference>
<name>ANP7_ZOAAM</name>
<keyword id="KW-0047">Antifreeze protein</keyword>
<keyword id="KW-0903">Direct protein sequencing</keyword>
<keyword id="KW-0964">Secreted</keyword>
<sequence>SQSVVATRLIPMNTALTPAMMEGKVTNPIGIPFAEMSQIVGKQVNRIVAKGQTLMPNMVKTYAA</sequence>